<dbReference type="EMBL" id="AK077528">
    <property type="protein sequence ID" value="BAC36847.1"/>
    <property type="molecule type" value="mRNA"/>
</dbReference>
<dbReference type="EMBL" id="AK167279">
    <property type="protein sequence ID" value="BAE39389.1"/>
    <property type="molecule type" value="mRNA"/>
</dbReference>
<dbReference type="EMBL" id="BC024462">
    <property type="protein sequence ID" value="AAH24462.1"/>
    <property type="molecule type" value="mRNA"/>
</dbReference>
<dbReference type="EMBL" id="CK030526">
    <property type="status" value="NOT_ANNOTATED_CDS"/>
    <property type="molecule type" value="mRNA"/>
</dbReference>
<dbReference type="CCDS" id="CCDS28924.1">
    <molecule id="Q8QZT4-1"/>
</dbReference>
<dbReference type="CCDS" id="CCDS84327.1">
    <molecule id="Q8QZT4-2"/>
</dbReference>
<dbReference type="RefSeq" id="NP_001334337.1">
    <molecule id="Q8QZT4-2"/>
    <property type="nucleotide sequence ID" value="NM_001347408.2"/>
</dbReference>
<dbReference type="RefSeq" id="NP_001346742.1">
    <molecule id="Q8QZT4-1"/>
    <property type="nucleotide sequence ID" value="NM_001359813.2"/>
</dbReference>
<dbReference type="RefSeq" id="NP_001346743.1">
    <molecule id="Q8QZT4-2"/>
    <property type="nucleotide sequence ID" value="NM_001359814.1"/>
</dbReference>
<dbReference type="RefSeq" id="NP_001418813.1">
    <molecule id="Q8QZT4-2"/>
    <property type="nucleotide sequence ID" value="NM_001431884.1"/>
</dbReference>
<dbReference type="RefSeq" id="NP_001418814.1">
    <molecule id="Q8QZT4-1"/>
    <property type="nucleotide sequence ID" value="NM_001431885.1"/>
</dbReference>
<dbReference type="RefSeq" id="NP_808306.1">
    <molecule id="Q8QZT4-1"/>
    <property type="nucleotide sequence ID" value="NM_177638.6"/>
</dbReference>
<dbReference type="RefSeq" id="XP_006524228.1">
    <property type="nucleotide sequence ID" value="XM_006524165.3"/>
</dbReference>
<dbReference type="RefSeq" id="XP_006524230.1">
    <property type="nucleotide sequence ID" value="XM_006524167.3"/>
</dbReference>
<dbReference type="RefSeq" id="XP_036016454.1">
    <molecule id="Q8QZT4-1"/>
    <property type="nucleotide sequence ID" value="XM_036160561.1"/>
</dbReference>
<dbReference type="SMR" id="Q8QZT4"/>
<dbReference type="FunCoup" id="Q8QZT4">
    <property type="interactions" value="24"/>
</dbReference>
<dbReference type="STRING" id="10090.ENSMUSP00000125760"/>
<dbReference type="GlyCosmos" id="Q8QZT4">
    <property type="glycosylation" value="1 site, No reported glycans"/>
</dbReference>
<dbReference type="GlyGen" id="Q8QZT4">
    <property type="glycosylation" value="2 sites"/>
</dbReference>
<dbReference type="PhosphoSitePlus" id="Q8QZT4"/>
<dbReference type="PaxDb" id="10090-ENSMUSP00000094902"/>
<dbReference type="ProteomicsDB" id="285314">
    <molecule id="Q8QZT4-1"/>
</dbReference>
<dbReference type="ProteomicsDB" id="285315">
    <molecule id="Q8QZT4-2"/>
</dbReference>
<dbReference type="Antibodypedia" id="3003">
    <property type="antibodies" value="92 antibodies from 15 providers"/>
</dbReference>
<dbReference type="DNASU" id="224912"/>
<dbReference type="Ensembl" id="ENSMUST00000071826.10">
    <molecule id="Q8QZT4-1"/>
    <property type="protein sequence ID" value="ENSMUSP00000071729.4"/>
    <property type="gene ID" value="ENSMUSG00000044279.16"/>
</dbReference>
<dbReference type="Ensembl" id="ENSMUST00000097299.10">
    <molecule id="Q8QZT4-1"/>
    <property type="protein sequence ID" value="ENSMUSP00000094902.4"/>
    <property type="gene ID" value="ENSMUSG00000044279.16"/>
</dbReference>
<dbReference type="Ensembl" id="ENSMUST00000163763.2">
    <molecule id="Q8QZT4-1"/>
    <property type="protein sequence ID" value="ENSMUSP00000132502.2"/>
    <property type="gene ID" value="ENSMUSG00000044279.16"/>
</dbReference>
<dbReference type="Ensembl" id="ENSMUST00000169543.8">
    <molecule id="Q8QZT4-2"/>
    <property type="protein sequence ID" value="ENSMUSP00000125760.2"/>
    <property type="gene ID" value="ENSMUSG00000044279.16"/>
</dbReference>
<dbReference type="GeneID" id="224912"/>
<dbReference type="KEGG" id="mmu:224912"/>
<dbReference type="UCSC" id="uc008ddw.1">
    <molecule id="Q8QZT4-1"/>
    <property type="organism name" value="mouse"/>
</dbReference>
<dbReference type="AGR" id="MGI:2670904"/>
<dbReference type="CTD" id="92359"/>
<dbReference type="MGI" id="MGI:2670904">
    <property type="gene designation" value="Crb3"/>
</dbReference>
<dbReference type="VEuPathDB" id="HostDB:ENSMUSG00000044279"/>
<dbReference type="eggNOG" id="ENOG502S74B">
    <property type="taxonomic scope" value="Eukaryota"/>
</dbReference>
<dbReference type="GeneTree" id="ENSGT00950000183101"/>
<dbReference type="HOGENOM" id="CLU_2120342_0_0_1"/>
<dbReference type="InParanoid" id="Q8QZT4"/>
<dbReference type="OMA" id="EEQFNHA"/>
<dbReference type="OrthoDB" id="79973at9989"/>
<dbReference type="PhylomeDB" id="Q8QZT4"/>
<dbReference type="TreeFam" id="TF338371"/>
<dbReference type="BioGRID-ORCS" id="224912">
    <property type="hits" value="2 hits in 44 CRISPR screens"/>
</dbReference>
<dbReference type="ChiTaRS" id="Crb3">
    <property type="organism name" value="mouse"/>
</dbReference>
<dbReference type="PRO" id="PR:Q8QZT4"/>
<dbReference type="Proteomes" id="UP000000589">
    <property type="component" value="Chromosome 17"/>
</dbReference>
<dbReference type="RNAct" id="Q8QZT4">
    <property type="molecule type" value="protein"/>
</dbReference>
<dbReference type="Bgee" id="ENSMUSG00000044279">
    <property type="expression patterns" value="Expressed in cleaving embryo and 168 other cell types or tissues"/>
</dbReference>
<dbReference type="ExpressionAtlas" id="Q8QZT4">
    <property type="expression patterns" value="baseline and differential"/>
</dbReference>
<dbReference type="GO" id="GO:0045177">
    <property type="term" value="C:apical part of cell"/>
    <property type="evidence" value="ECO:0000314"/>
    <property type="project" value="MGI"/>
</dbReference>
<dbReference type="GO" id="GO:0016324">
    <property type="term" value="C:apical plasma membrane"/>
    <property type="evidence" value="ECO:0000247"/>
    <property type="project" value="MGI"/>
</dbReference>
<dbReference type="GO" id="GO:0005923">
    <property type="term" value="C:bicellular tight junction"/>
    <property type="evidence" value="ECO:0007669"/>
    <property type="project" value="UniProtKB-SubCell"/>
</dbReference>
<dbReference type="GO" id="GO:0035003">
    <property type="term" value="C:subapical complex"/>
    <property type="evidence" value="ECO:0000314"/>
    <property type="project" value="MGI"/>
</dbReference>
<dbReference type="GO" id="GO:0017124">
    <property type="term" value="F:SH3 domain binding"/>
    <property type="evidence" value="ECO:0007669"/>
    <property type="project" value="Ensembl"/>
</dbReference>
<dbReference type="GO" id="GO:0045216">
    <property type="term" value="P:cell-cell junction organization"/>
    <property type="evidence" value="ECO:0000247"/>
    <property type="project" value="MGI"/>
</dbReference>
<dbReference type="GO" id="GO:0045198">
    <property type="term" value="P:establishment of epithelial cell apical/basal polarity"/>
    <property type="evidence" value="ECO:0000247"/>
    <property type="project" value="MGI"/>
</dbReference>
<dbReference type="GO" id="GO:1901890">
    <property type="term" value="P:positive regulation of cell junction assembly"/>
    <property type="evidence" value="ECO:0000315"/>
    <property type="project" value="UniProtKB"/>
</dbReference>
<dbReference type="GO" id="GO:0072659">
    <property type="term" value="P:protein localization to plasma membrane"/>
    <property type="evidence" value="ECO:0007669"/>
    <property type="project" value="Ensembl"/>
</dbReference>
<comment type="function">
    <text evidence="3 8">Involved in the establishment of cell polarity in mammalian epithelial cells (By similarity). Regulates the morphogenesis of tight junctions (PubMed:21145499). Involved in promoting phosphorylation and cytoplasmic retention of transcriptional coactivators YAP1 and WWTR1/TAZ which leads to suppression of TGFB1-dependent transcription of target genes such as CCN2/CTGF, SERPINE1/PAI1, SNAI1/SNAIL1 and SMAD7 (PubMed:21145499).</text>
</comment>
<comment type="subunit">
    <text evidence="2 3 6">Component of a complex composed of CRB3, PALS1 and PATJ (By similarity). Interacts (via C-terminus) with PALS1 (via PDZ domain) (PubMed:12527193). Interacts with PARD6A (By similarity). Interacts (via intracellular domain) with EPB41L5 (By similarity). Interacts with WDR83 (By similarity).</text>
</comment>
<comment type="subcellular location">
    <subcellularLocation>
        <location evidence="3">Apical cell membrane</location>
        <topology evidence="4">Single-pass type I membrane protein</topology>
    </subcellularLocation>
    <subcellularLocation>
        <location evidence="3">Cell junction</location>
        <location evidence="3">Tight junction</location>
    </subcellularLocation>
    <text evidence="3">Localizes primarily to the apical membrane with a small fraction in the upper part of tight junctions of epithelial cells.</text>
</comment>
<comment type="alternative products">
    <event type="alternative splicing"/>
    <isoform>
        <id>Q8QZT4-1</id>
        <name>1</name>
        <sequence type="displayed"/>
    </isoform>
    <isoform>
        <id>Q8QZT4-2</id>
        <name>2</name>
        <sequence type="described" ref="VSP_013990"/>
    </isoform>
</comment>
<comment type="tissue specificity">
    <text evidence="7 9">Expressed in the apical renal tubules (at protein level) (PubMed:17920587). Expressed in the retinal pigment epithelium (PubMed:26404741).</text>
</comment>
<comment type="developmental stage">
    <text evidence="7">Expressed in the branchial arches, optic vesicle and mesonephric tubules of the kidney at 10.5 dpc (PubMed:17920587). Expressed in the internal endodermal layer and in the nascent bronchial tips of the lung at 11.5 dpc (PubMed:17920587).</text>
</comment>
<comment type="domain">
    <text evidence="3">The PDZ-binding motif is involved in the interactions with PARD6A and PALS1.</text>
</comment>
<reference key="1">
    <citation type="journal article" date="2005" name="Science">
        <title>The transcriptional landscape of the mammalian genome.</title>
        <authorList>
            <person name="Carninci P."/>
            <person name="Kasukawa T."/>
            <person name="Katayama S."/>
            <person name="Gough J."/>
            <person name="Frith M.C."/>
            <person name="Maeda N."/>
            <person name="Oyama R."/>
            <person name="Ravasi T."/>
            <person name="Lenhard B."/>
            <person name="Wells C."/>
            <person name="Kodzius R."/>
            <person name="Shimokawa K."/>
            <person name="Bajic V.B."/>
            <person name="Brenner S.E."/>
            <person name="Batalov S."/>
            <person name="Forrest A.R."/>
            <person name="Zavolan M."/>
            <person name="Davis M.J."/>
            <person name="Wilming L.G."/>
            <person name="Aidinis V."/>
            <person name="Allen J.E."/>
            <person name="Ambesi-Impiombato A."/>
            <person name="Apweiler R."/>
            <person name="Aturaliya R.N."/>
            <person name="Bailey T.L."/>
            <person name="Bansal M."/>
            <person name="Baxter L."/>
            <person name="Beisel K.W."/>
            <person name="Bersano T."/>
            <person name="Bono H."/>
            <person name="Chalk A.M."/>
            <person name="Chiu K.P."/>
            <person name="Choudhary V."/>
            <person name="Christoffels A."/>
            <person name="Clutterbuck D.R."/>
            <person name="Crowe M.L."/>
            <person name="Dalla E."/>
            <person name="Dalrymple B.P."/>
            <person name="de Bono B."/>
            <person name="Della Gatta G."/>
            <person name="di Bernardo D."/>
            <person name="Down T."/>
            <person name="Engstrom P."/>
            <person name="Fagiolini M."/>
            <person name="Faulkner G."/>
            <person name="Fletcher C.F."/>
            <person name="Fukushima T."/>
            <person name="Furuno M."/>
            <person name="Futaki S."/>
            <person name="Gariboldi M."/>
            <person name="Georgii-Hemming P."/>
            <person name="Gingeras T.R."/>
            <person name="Gojobori T."/>
            <person name="Green R.E."/>
            <person name="Gustincich S."/>
            <person name="Harbers M."/>
            <person name="Hayashi Y."/>
            <person name="Hensch T.K."/>
            <person name="Hirokawa N."/>
            <person name="Hill D."/>
            <person name="Huminiecki L."/>
            <person name="Iacono M."/>
            <person name="Ikeo K."/>
            <person name="Iwama A."/>
            <person name="Ishikawa T."/>
            <person name="Jakt M."/>
            <person name="Kanapin A."/>
            <person name="Katoh M."/>
            <person name="Kawasawa Y."/>
            <person name="Kelso J."/>
            <person name="Kitamura H."/>
            <person name="Kitano H."/>
            <person name="Kollias G."/>
            <person name="Krishnan S.P."/>
            <person name="Kruger A."/>
            <person name="Kummerfeld S.K."/>
            <person name="Kurochkin I.V."/>
            <person name="Lareau L.F."/>
            <person name="Lazarevic D."/>
            <person name="Lipovich L."/>
            <person name="Liu J."/>
            <person name="Liuni S."/>
            <person name="McWilliam S."/>
            <person name="Madan Babu M."/>
            <person name="Madera M."/>
            <person name="Marchionni L."/>
            <person name="Matsuda H."/>
            <person name="Matsuzawa S."/>
            <person name="Miki H."/>
            <person name="Mignone F."/>
            <person name="Miyake S."/>
            <person name="Morris K."/>
            <person name="Mottagui-Tabar S."/>
            <person name="Mulder N."/>
            <person name="Nakano N."/>
            <person name="Nakauchi H."/>
            <person name="Ng P."/>
            <person name="Nilsson R."/>
            <person name="Nishiguchi S."/>
            <person name="Nishikawa S."/>
            <person name="Nori F."/>
            <person name="Ohara O."/>
            <person name="Okazaki Y."/>
            <person name="Orlando V."/>
            <person name="Pang K.C."/>
            <person name="Pavan W.J."/>
            <person name="Pavesi G."/>
            <person name="Pesole G."/>
            <person name="Petrovsky N."/>
            <person name="Piazza S."/>
            <person name="Reed J."/>
            <person name="Reid J.F."/>
            <person name="Ring B.Z."/>
            <person name="Ringwald M."/>
            <person name="Rost B."/>
            <person name="Ruan Y."/>
            <person name="Salzberg S.L."/>
            <person name="Sandelin A."/>
            <person name="Schneider C."/>
            <person name="Schoenbach C."/>
            <person name="Sekiguchi K."/>
            <person name="Semple C.A."/>
            <person name="Seno S."/>
            <person name="Sessa L."/>
            <person name="Sheng Y."/>
            <person name="Shibata Y."/>
            <person name="Shimada H."/>
            <person name="Shimada K."/>
            <person name="Silva D."/>
            <person name="Sinclair B."/>
            <person name="Sperling S."/>
            <person name="Stupka E."/>
            <person name="Sugiura K."/>
            <person name="Sultana R."/>
            <person name="Takenaka Y."/>
            <person name="Taki K."/>
            <person name="Tammoja K."/>
            <person name="Tan S.L."/>
            <person name="Tang S."/>
            <person name="Taylor M.S."/>
            <person name="Tegner J."/>
            <person name="Teichmann S.A."/>
            <person name="Ueda H.R."/>
            <person name="van Nimwegen E."/>
            <person name="Verardo R."/>
            <person name="Wei C.L."/>
            <person name="Yagi K."/>
            <person name="Yamanishi H."/>
            <person name="Zabarovsky E."/>
            <person name="Zhu S."/>
            <person name="Zimmer A."/>
            <person name="Hide W."/>
            <person name="Bult C."/>
            <person name="Grimmond S.M."/>
            <person name="Teasdale R.D."/>
            <person name="Liu E.T."/>
            <person name="Brusic V."/>
            <person name="Quackenbush J."/>
            <person name="Wahlestedt C."/>
            <person name="Mattick J.S."/>
            <person name="Hume D.A."/>
            <person name="Kai C."/>
            <person name="Sasaki D."/>
            <person name="Tomaru Y."/>
            <person name="Fukuda S."/>
            <person name="Kanamori-Katayama M."/>
            <person name="Suzuki M."/>
            <person name="Aoki J."/>
            <person name="Arakawa T."/>
            <person name="Iida J."/>
            <person name="Imamura K."/>
            <person name="Itoh M."/>
            <person name="Kato T."/>
            <person name="Kawaji H."/>
            <person name="Kawagashira N."/>
            <person name="Kawashima T."/>
            <person name="Kojima M."/>
            <person name="Kondo S."/>
            <person name="Konno H."/>
            <person name="Nakano K."/>
            <person name="Ninomiya N."/>
            <person name="Nishio T."/>
            <person name="Okada M."/>
            <person name="Plessy C."/>
            <person name="Shibata K."/>
            <person name="Shiraki T."/>
            <person name="Suzuki S."/>
            <person name="Tagami M."/>
            <person name="Waki K."/>
            <person name="Watahiki A."/>
            <person name="Okamura-Oho Y."/>
            <person name="Suzuki H."/>
            <person name="Kawai J."/>
            <person name="Hayashizaki Y."/>
        </authorList>
    </citation>
    <scope>NUCLEOTIDE SEQUENCE [LARGE SCALE MRNA] (ISOFORM 1)</scope>
    <source>
        <strain>C57BL/6J</strain>
        <tissue>Embryo</tissue>
    </source>
</reference>
<reference key="2">
    <citation type="journal article" date="2004" name="Genome Res.">
        <title>The status, quality, and expansion of the NIH full-length cDNA project: the Mammalian Gene Collection (MGC).</title>
        <authorList>
            <consortium name="The MGC Project Team"/>
        </authorList>
    </citation>
    <scope>NUCLEOTIDE SEQUENCE [LARGE SCALE MRNA] (ISOFORMS 1 AND 2)</scope>
    <source>
        <strain>FVB/N</strain>
        <tissue>Kidney</tissue>
        <tissue>Placenta</tissue>
    </source>
</reference>
<reference key="3">
    <citation type="journal article" date="2003" name="Gene">
        <title>Mammalian Crumbs3 is a small transmembrane protein linked to protein associated with Lin-7 (Pals1).</title>
        <authorList>
            <person name="Makarova O."/>
            <person name="Roh M.H."/>
            <person name="Liu C.-J."/>
            <person name="Laurinec S."/>
            <person name="Margolis B."/>
        </authorList>
    </citation>
    <scope>INTERACTION WITH PATJ AND PALS1</scope>
</reference>
<reference key="4">
    <citation type="journal article" date="2007" name="Exp. Cell Res.">
        <title>FERM protein EPB41L5 is a novel member of the mammalian CRB-MPP5 polarity complex.</title>
        <authorList>
            <person name="Gosens I."/>
            <person name="Sessa A."/>
            <person name="den Hollander A.I."/>
            <person name="Letteboer S.J.F."/>
            <person name="Belloni V."/>
            <person name="Arends M.L."/>
            <person name="Le Bivic A."/>
            <person name="Cremers F.P.M."/>
            <person name="Broccoli V."/>
            <person name="Roepman R."/>
        </authorList>
    </citation>
    <scope>TISSUE SPECIFICITY</scope>
    <scope>DEVELOPMENTAL STAGE</scope>
</reference>
<reference key="5">
    <citation type="journal article" date="2010" name="Dev. Cell">
        <title>The Crumbs complex couples cell density sensing to Hippo-dependent control of the TGF-beta-SMAD pathway.</title>
        <authorList>
            <person name="Varelas X."/>
            <person name="Samavarchi-Tehrani P."/>
            <person name="Narimatsu M."/>
            <person name="Weiss A."/>
            <person name="Cockburn K."/>
            <person name="Larsen B.G."/>
            <person name="Rossant J."/>
            <person name="Wrana J.L."/>
        </authorList>
    </citation>
    <scope>FUNCTION</scope>
</reference>
<reference key="6">
    <citation type="journal article" date="2015" name="Sci. Rep.">
        <title>CRB2 completes a fully expressed Crumbs complex in the Retinal Pigment Epithelium.</title>
        <authorList>
            <person name="Paniagua A.E."/>
            <person name="Herranz-Martin S."/>
            <person name="Jimeno D."/>
            <person name="Jimeno A.M."/>
            <person name="Lopez-Benito S."/>
            <person name="Carlos Arevalo J."/>
            <person name="Velasco A."/>
            <person name="Aijon J."/>
            <person name="Lillo C."/>
        </authorList>
    </citation>
    <scope>TISSUE SPECIFICITY</scope>
</reference>
<evidence type="ECO:0000250" key="1"/>
<evidence type="ECO:0000250" key="2">
    <source>
        <dbReference type="UniProtKB" id="A0A5F4BST2"/>
    </source>
</evidence>
<evidence type="ECO:0000250" key="3">
    <source>
        <dbReference type="UniProtKB" id="Q9BUF7"/>
    </source>
</evidence>
<evidence type="ECO:0000255" key="4"/>
<evidence type="ECO:0000256" key="5">
    <source>
        <dbReference type="SAM" id="MobiDB-lite"/>
    </source>
</evidence>
<evidence type="ECO:0000269" key="6">
    <source>
    </source>
</evidence>
<evidence type="ECO:0000269" key="7">
    <source>
    </source>
</evidence>
<evidence type="ECO:0000269" key="8">
    <source>
    </source>
</evidence>
<evidence type="ECO:0000269" key="9">
    <source>
    </source>
</evidence>
<evidence type="ECO:0000303" key="10">
    <source>
    </source>
</evidence>
<gene>
    <name type="primary">Crb3</name>
</gene>
<name>CRUM3_MOUSE</name>
<feature type="signal peptide" evidence="4">
    <location>
        <begin position="1"/>
        <end position="24"/>
    </location>
</feature>
<feature type="chain" id="PRO_0000021006" description="Protein crumbs homolog 3">
    <location>
        <begin position="25"/>
        <end position="113"/>
    </location>
</feature>
<feature type="topological domain" description="Extracellular" evidence="4">
    <location>
        <begin position="25"/>
        <end position="49"/>
    </location>
</feature>
<feature type="transmembrane region" description="Helical" evidence="4">
    <location>
        <begin position="50"/>
        <end position="70"/>
    </location>
</feature>
<feature type="topological domain" description="Cytoplasmic" evidence="4">
    <location>
        <begin position="71"/>
        <end position="113"/>
    </location>
</feature>
<feature type="region of interest" description="Disordered" evidence="5">
    <location>
        <begin position="23"/>
        <end position="44"/>
    </location>
</feature>
<feature type="region of interest" description="Interaction with EPB41L5" evidence="3">
    <location>
        <begin position="77"/>
        <end position="113"/>
    </location>
</feature>
<feature type="region of interest" description="Disordered" evidence="5">
    <location>
        <begin position="80"/>
        <end position="113"/>
    </location>
</feature>
<feature type="short sequence motif" description="PDZ-binding">
    <location>
        <begin position="110"/>
        <end position="113"/>
    </location>
</feature>
<feature type="compositionally biased region" description="Polar residues" evidence="5">
    <location>
        <begin position="83"/>
        <end position="92"/>
    </location>
</feature>
<feature type="glycosylation site" description="N-linked (GlcNAc...) asparagine" evidence="1">
    <location>
        <position position="31"/>
    </location>
</feature>
<feature type="splice variant" id="VSP_013990" description="In isoform 2." evidence="10">
    <original>VGARAPPPPNLKLPPEERLI</original>
    <variation>FSHAAAEARAPQDSKEPVRGCLPI</variation>
    <location>
        <begin position="94"/>
        <end position="113"/>
    </location>
</feature>
<keyword id="KW-0025">Alternative splicing</keyword>
<keyword id="KW-0965">Cell junction</keyword>
<keyword id="KW-1003">Cell membrane</keyword>
<keyword id="KW-0325">Glycoprotein</keyword>
<keyword id="KW-0472">Membrane</keyword>
<keyword id="KW-1185">Reference proteome</keyword>
<keyword id="KW-0732">Signal</keyword>
<keyword id="KW-0796">Tight junction</keyword>
<keyword id="KW-0812">Transmembrane</keyword>
<keyword id="KW-1133">Transmembrane helix</keyword>
<proteinExistence type="evidence at protein level"/>
<sequence length="113" mass="11921">MATPGLGVLLAFGLPMLPSGWSLTAPDPFTNSTTQPPGDESNGGLSSGAIVAITVVFSILGVLLIAVGLFLLMRKLREKRQTEGTYRPSSEEQVGARAPPPPNLKLPPEERLI</sequence>
<accession>Q8QZT4</accession>
<accession>Q3TJV6</accession>
<protein>
    <recommendedName>
        <fullName>Protein crumbs homolog 3</fullName>
    </recommendedName>
</protein>
<organism>
    <name type="scientific">Mus musculus</name>
    <name type="common">Mouse</name>
    <dbReference type="NCBI Taxonomy" id="10090"/>
    <lineage>
        <taxon>Eukaryota</taxon>
        <taxon>Metazoa</taxon>
        <taxon>Chordata</taxon>
        <taxon>Craniata</taxon>
        <taxon>Vertebrata</taxon>
        <taxon>Euteleostomi</taxon>
        <taxon>Mammalia</taxon>
        <taxon>Eutheria</taxon>
        <taxon>Euarchontoglires</taxon>
        <taxon>Glires</taxon>
        <taxon>Rodentia</taxon>
        <taxon>Myomorpha</taxon>
        <taxon>Muroidea</taxon>
        <taxon>Muridae</taxon>
        <taxon>Murinae</taxon>
        <taxon>Mus</taxon>
        <taxon>Mus</taxon>
    </lineage>
</organism>